<name>MATK_MACCO</name>
<protein>
    <recommendedName>
        <fullName evidence="1">Maturase K</fullName>
    </recommendedName>
    <alternativeName>
        <fullName evidence="1">Intron maturase</fullName>
    </alternativeName>
</protein>
<organism>
    <name type="scientific">Macrozamia communis</name>
    <name type="common">Burrawang palm</name>
    <dbReference type="NCBI Taxonomy" id="114456"/>
    <lineage>
        <taxon>Eukaryota</taxon>
        <taxon>Viridiplantae</taxon>
        <taxon>Streptophyta</taxon>
        <taxon>Embryophyta</taxon>
        <taxon>Tracheophyta</taxon>
        <taxon>Spermatophyta</taxon>
        <taxon>Cycadidae</taxon>
        <taxon>Cycadales</taxon>
        <taxon>Zamiaceae</taxon>
        <taxon>Macrozamia</taxon>
    </lineage>
</organism>
<reference key="1">
    <citation type="submission" date="2000-06" db="EMBL/GenBank/DDBJ databases">
        <title>Chloroplast matK sequence data reconfirm the monophyly of extant gymnosperms and the coniferophytic origin of Gnetales.</title>
        <authorList>
            <person name="Chaw S.-M."/>
            <person name="Hu S.-H."/>
        </authorList>
    </citation>
    <scope>NUCLEOTIDE SEQUENCE [GENOMIC DNA]</scope>
</reference>
<feature type="chain" id="PRO_0000143500" description="Maturase K">
    <location>
        <begin position="1"/>
        <end position="499"/>
    </location>
</feature>
<geneLocation type="chloroplast"/>
<accession>Q8MEX7</accession>
<proteinExistence type="inferred from homology"/>
<comment type="function">
    <text evidence="1">Usually encoded in the trnK tRNA gene intron. Probably assists in splicing its own and other chloroplast group II introns.</text>
</comment>
<comment type="subcellular location">
    <subcellularLocation>
        <location>Plastid</location>
        <location>Chloroplast</location>
    </subcellularLocation>
</comment>
<comment type="similarity">
    <text evidence="1">Belongs to the intron maturase 2 family. MatK subfamily.</text>
</comment>
<sequence>MDKLQRDGKEDTSRQRRFLYPLLFQEDFYTIAYDHCSNRSSSFEPMGNSSSNDRFSFLTVKRSISRIRQQNGSIVPFVNCDQNKLVGHNKSFYSELVLGGLTAVSEVPFSIRSKHSLEGMNEWASFRSINSIFPLMEDKIPHSNFILDIRIPHLTHPEILVRTFRRWIQDAPFLHSLRSVLHEHRNLIISSNLDQLILIASKKNTRLSLFLWNYYAYECESLLVPLWKRFSHSRSLPYESFIERTPFYRKIEHIVIFYHKYLKKSLWFLKDPSIHYVKYRERSIIALRGTYLLVKKWRYHLTNFWQCHFHLWLQPYRIYIDELSNNCFSFLGYLLSVKMKTSVVRIKMLDDSFITDLITKEFDPIAPTTLLIGSLVKEKFCDISGHPFSRLAWTGLTDDDILDRFDRIWRNIFHYHSGSSKKDGLYRMKYILRLPCAKTLACKHKSAIRAVRERFGSELFTKSFPKERESIFLSFSKTRSQRERIWYSDIIQRNPFVNS</sequence>
<keyword id="KW-0150">Chloroplast</keyword>
<keyword id="KW-0507">mRNA processing</keyword>
<keyword id="KW-0934">Plastid</keyword>
<keyword id="KW-0694">RNA-binding</keyword>
<keyword id="KW-0819">tRNA processing</keyword>
<gene>
    <name evidence="1" type="primary">matK</name>
</gene>
<dbReference type="EMBL" id="AF279801">
    <property type="protein sequence ID" value="AAK69124.1"/>
    <property type="molecule type" value="Genomic_DNA"/>
</dbReference>
<dbReference type="GO" id="GO:0009507">
    <property type="term" value="C:chloroplast"/>
    <property type="evidence" value="ECO:0007669"/>
    <property type="project" value="UniProtKB-SubCell"/>
</dbReference>
<dbReference type="GO" id="GO:0003723">
    <property type="term" value="F:RNA binding"/>
    <property type="evidence" value="ECO:0007669"/>
    <property type="project" value="UniProtKB-KW"/>
</dbReference>
<dbReference type="GO" id="GO:0006397">
    <property type="term" value="P:mRNA processing"/>
    <property type="evidence" value="ECO:0007669"/>
    <property type="project" value="UniProtKB-KW"/>
</dbReference>
<dbReference type="GO" id="GO:0008380">
    <property type="term" value="P:RNA splicing"/>
    <property type="evidence" value="ECO:0007669"/>
    <property type="project" value="UniProtKB-UniRule"/>
</dbReference>
<dbReference type="GO" id="GO:0008033">
    <property type="term" value="P:tRNA processing"/>
    <property type="evidence" value="ECO:0007669"/>
    <property type="project" value="UniProtKB-KW"/>
</dbReference>
<dbReference type="HAMAP" id="MF_01390">
    <property type="entry name" value="MatK"/>
    <property type="match status" value="1"/>
</dbReference>
<dbReference type="InterPro" id="IPR024937">
    <property type="entry name" value="Domain_X"/>
</dbReference>
<dbReference type="InterPro" id="IPR002866">
    <property type="entry name" value="Maturase_MatK"/>
</dbReference>
<dbReference type="InterPro" id="IPR024942">
    <property type="entry name" value="Maturase_MatK_N"/>
</dbReference>
<dbReference type="PANTHER" id="PTHR34811">
    <property type="entry name" value="MATURASE K"/>
    <property type="match status" value="1"/>
</dbReference>
<dbReference type="PANTHER" id="PTHR34811:SF1">
    <property type="entry name" value="MATURASE K"/>
    <property type="match status" value="1"/>
</dbReference>
<dbReference type="Pfam" id="PF01348">
    <property type="entry name" value="Intron_maturas2"/>
    <property type="match status" value="1"/>
</dbReference>
<dbReference type="Pfam" id="PF01824">
    <property type="entry name" value="MatK_N"/>
    <property type="match status" value="1"/>
</dbReference>
<evidence type="ECO:0000255" key="1">
    <source>
        <dbReference type="HAMAP-Rule" id="MF_01390"/>
    </source>
</evidence>